<reference key="1">
    <citation type="journal article" date="2000" name="Exp. Eye Res.">
        <title>Kv3.3 potassium channels in lens epithelium and corneal endothelium.</title>
        <authorList>
            <person name="Rae J.L."/>
            <person name="Shepard A.R."/>
        </authorList>
    </citation>
    <scope>NUCLEOTIDE SEQUENCE [MRNA]</scope>
    <scope>FUNCTION</scope>
    <scope>TRANSPORTER ACTIVITY</scope>
    <scope>SUBCELLULAR LOCATION</scope>
    <scope>VARIANT GLY-63</scope>
    <source>
        <tissue>Lens epithelium</tissue>
    </source>
</reference>
<reference key="2">
    <citation type="journal article" date="2004" name="Nature">
        <title>The DNA sequence and biology of human chromosome 19.</title>
        <authorList>
            <person name="Grimwood J."/>
            <person name="Gordon L.A."/>
            <person name="Olsen A.S."/>
            <person name="Terry A."/>
            <person name="Schmutz J."/>
            <person name="Lamerdin J.E."/>
            <person name="Hellsten U."/>
            <person name="Goodstein D."/>
            <person name="Couronne O."/>
            <person name="Tran-Gyamfi M."/>
            <person name="Aerts A."/>
            <person name="Altherr M."/>
            <person name="Ashworth L."/>
            <person name="Bajorek E."/>
            <person name="Black S."/>
            <person name="Branscomb E."/>
            <person name="Caenepeel S."/>
            <person name="Carrano A.V."/>
            <person name="Caoile C."/>
            <person name="Chan Y.M."/>
            <person name="Christensen M."/>
            <person name="Cleland C.A."/>
            <person name="Copeland A."/>
            <person name="Dalin E."/>
            <person name="Dehal P."/>
            <person name="Denys M."/>
            <person name="Detter J.C."/>
            <person name="Escobar J."/>
            <person name="Flowers D."/>
            <person name="Fotopulos D."/>
            <person name="Garcia C."/>
            <person name="Georgescu A.M."/>
            <person name="Glavina T."/>
            <person name="Gomez M."/>
            <person name="Gonzales E."/>
            <person name="Groza M."/>
            <person name="Hammon N."/>
            <person name="Hawkins T."/>
            <person name="Haydu L."/>
            <person name="Ho I."/>
            <person name="Huang W."/>
            <person name="Israni S."/>
            <person name="Jett J."/>
            <person name="Kadner K."/>
            <person name="Kimball H."/>
            <person name="Kobayashi A."/>
            <person name="Larionov V."/>
            <person name="Leem S.-H."/>
            <person name="Lopez F."/>
            <person name="Lou Y."/>
            <person name="Lowry S."/>
            <person name="Malfatti S."/>
            <person name="Martinez D."/>
            <person name="McCready P.M."/>
            <person name="Medina C."/>
            <person name="Morgan J."/>
            <person name="Nelson K."/>
            <person name="Nolan M."/>
            <person name="Ovcharenko I."/>
            <person name="Pitluck S."/>
            <person name="Pollard M."/>
            <person name="Popkie A.P."/>
            <person name="Predki P."/>
            <person name="Quan G."/>
            <person name="Ramirez L."/>
            <person name="Rash S."/>
            <person name="Retterer J."/>
            <person name="Rodriguez A."/>
            <person name="Rogers S."/>
            <person name="Salamov A."/>
            <person name="Salazar A."/>
            <person name="She X."/>
            <person name="Smith D."/>
            <person name="Slezak T."/>
            <person name="Solovyev V."/>
            <person name="Thayer N."/>
            <person name="Tice H."/>
            <person name="Tsai M."/>
            <person name="Ustaszewska A."/>
            <person name="Vo N."/>
            <person name="Wagner M."/>
            <person name="Wheeler J."/>
            <person name="Wu K."/>
            <person name="Xie G."/>
            <person name="Yang J."/>
            <person name="Dubchak I."/>
            <person name="Furey T.S."/>
            <person name="DeJong P."/>
            <person name="Dickson M."/>
            <person name="Gordon D."/>
            <person name="Eichler E.E."/>
            <person name="Pennacchio L.A."/>
            <person name="Richardson P."/>
            <person name="Stubbs L."/>
            <person name="Rokhsar D.S."/>
            <person name="Myers R.M."/>
            <person name="Rubin E.M."/>
            <person name="Lucas S.M."/>
        </authorList>
    </citation>
    <scope>NUCLEOTIDE SEQUENCE [LARGE SCALE GENOMIC DNA]</scope>
</reference>
<reference key="3">
    <citation type="submission" date="1992-01" db="EMBL/GenBank/DDBJ databases">
        <title>A human chromosome 19 Shaw type potassium channel gene.</title>
        <authorList>
            <person name="Lee J.E."/>
            <person name="Garbutt J.H."/>
            <person name="Phillips K.L."/>
            <person name="Roses A.D."/>
        </authorList>
    </citation>
    <scope>NUCLEOTIDE SEQUENCE [GENOMIC DNA] OF 291-651</scope>
</reference>
<reference key="4">
    <citation type="journal article" date="2016" name="Cell">
        <title>Kv3.3 channels bind Hax-1 and Arp2/3 to assemble a stable local actin network that regulates channel gating.</title>
        <authorList>
            <person name="Zhang Y."/>
            <person name="Zhang X.F."/>
            <person name="Fleming M.R."/>
            <person name="Amiri A."/>
            <person name="El-Hassar L."/>
            <person name="Surguchev A.A."/>
            <person name="Hyland C."/>
            <person name="Jenkins D.P."/>
            <person name="Desai R."/>
            <person name="Brown M.R."/>
            <person name="Gazula V.R."/>
            <person name="Waters M.F."/>
            <person name="Large C.H."/>
            <person name="Horvath T.L."/>
            <person name="Navaratnam D."/>
            <person name="Vaccarino F.M."/>
            <person name="Forscher P."/>
            <person name="Kaczmarek L.K."/>
        </authorList>
    </citation>
    <scope>FUNCTION</scope>
    <scope>TRANSPORTER ACTIVITY</scope>
    <scope>SUBCELLULAR LOCATION</scope>
    <scope>INTERACTION WITH HAX1 AND ACTR3</scope>
    <scope>DOMAIN</scope>
    <scope>MUTAGENESIS OF GLY-592</scope>
</reference>
<reference key="5">
    <citation type="journal article" date="2012" name="J. Physiol. (Lond.)">
        <title>Altered Kv3.3 channel gating in early-onset spinocerebellar ataxia type 13.</title>
        <authorList>
            <person name="Minassian N.A."/>
            <person name="Lin M.C."/>
            <person name="Papazian D.M."/>
        </authorList>
    </citation>
    <scope>CHARACTERIZATION OF VARIANTS SCA13 HIS-420; HIS-423 AND LEU-448</scope>
    <scope>FUNCTION</scope>
    <scope>TRANSPORTER ACTIVITY</scope>
    <scope>SUBCELLULAR LOCATION</scope>
</reference>
<reference key="6">
    <citation type="journal article" date="2013" name="Biochem. J.">
        <title>Spinocerebellar ataxia-13 Kv3.3 potassium channels: arginine-to-histidine mutations affect both functional and protein expression on the cell surface.</title>
        <authorList>
            <person name="Zhao J."/>
            <person name="Zhu J."/>
            <person name="Thornhill W.B."/>
        </authorList>
    </citation>
    <scope>CHARACTERIZATION OF VARIANTS SCA13 HIS-366; HIS-420; HIS-423 AND LEU-448</scope>
    <scope>FUNCTION</scope>
    <scope>TRANSPORTER ACTIVITY</scope>
    <scope>SUBCELLULAR LOCATION</scope>
    <scope>SUBUNIT</scope>
    <scope>INTERACTION WITH KCNC1</scope>
    <scope>MUTAGENESIS OF ARG-366; ARG-420 AND ARG-423</scope>
</reference>
<reference key="7">
    <citation type="journal article" date="2014" name="Neurobiol. Dis.">
        <title>KCNC3(R420H), a K(+) channel mutation causative in spinocerebellar ataxia 13 displays aberrant intracellular trafficking.</title>
        <authorList>
            <person name="Gallego-Iradi C."/>
            <person name="Bickford J.S."/>
            <person name="Khare S."/>
            <person name="Hall A."/>
            <person name="Nick J.A."/>
            <person name="Salmasinia D."/>
            <person name="Wawrowsky K."/>
            <person name="Bannykh S."/>
            <person name="Huynh D.P."/>
            <person name="Rincon-Limas D.E."/>
            <person name="Pulst S.M."/>
            <person name="Nick H.S."/>
            <person name="Fernandez-Funez P."/>
            <person name="Waters M.F."/>
        </authorList>
    </citation>
    <scope>CHARACTERIZATION OF VARIANTS SCA13 HIS-420 AND LEU-448</scope>
    <scope>SUBCELLULAR LOCATION</scope>
    <scope>GLYCOSYLATION</scope>
</reference>
<reference key="8">
    <citation type="journal article" date="2006" name="Nat. Genet.">
        <title>Mutations in voltage-gated potassium channel KCNC3 cause degenerative and developmental nervous system phenotypes.</title>
        <authorList>
            <person name="Waters M.F."/>
            <person name="Minassian N.A."/>
            <person name="Stevanin G."/>
            <person name="Figueroa K.P."/>
            <person name="Bannister J.P.A."/>
            <person name="Nolte D."/>
            <person name="Mock A.F."/>
            <person name="Evidente V.G.H."/>
            <person name="Fee D.B."/>
            <person name="Mueller U."/>
            <person name="Duerr A."/>
            <person name="Brice A."/>
            <person name="Papazian D.M."/>
            <person name="Pulst S.M."/>
        </authorList>
    </citation>
    <scope>VARIANTS SCA13 HIS-420 AND LEU-448</scope>
    <scope>CHARACTERIZATION OF VARIANTS SCA13 HIS-420 AND LEU-448</scope>
    <scope>FUNCTION</scope>
    <scope>TRANSPORTER ACTIVITY</scope>
    <scope>SUBCELLULAR LOCATION</scope>
</reference>
<reference key="9">
    <citation type="journal article" date="2010" name="Hum. Mutat.">
        <title>KCNC3: phenotype, mutations, channel biophysics-a study of 260 familial ataxia patients.</title>
        <authorList>
            <person name="Figueroa K.P."/>
            <person name="Minassian N.A."/>
            <person name="Stevanin G."/>
            <person name="Waters M."/>
            <person name="Garibyan V."/>
            <person name="Forlani S."/>
            <person name="Strzelczyk A."/>
            <person name="Buerk K."/>
            <person name="Brice A."/>
            <person name="Duerr A."/>
            <person name="Papazian D.M."/>
            <person name="Pulst S.M."/>
        </authorList>
    </citation>
    <scope>VARIANTS SCA13 HIS-366; HIS-420 AND HIS-423</scope>
    <scope>CHARACTERIZATION OF VARIANTS SCA13 HIS-366 AND HIS-423</scope>
    <scope>FUNCTION</scope>
    <scope>TRANSPORTER ACTIVITY</scope>
    <scope>SUBCELLULAR LOCATION</scope>
</reference>
<reference key="10">
    <citation type="journal article" date="2011" name="PLoS ONE">
        <title>Frequency of KCNC3 DNA variants as causes of spinocerebellar ataxia 13 (SCA13).</title>
        <authorList>
            <person name="Figueroa K.P."/>
            <person name="Waters M.F."/>
            <person name="Garibyan V."/>
            <person name="Bird T.D."/>
            <person name="Gomez C.M."/>
            <person name="Ranum L.P."/>
            <person name="Minassian N.A."/>
            <person name="Papazian D.M."/>
            <person name="Pulst S.M."/>
        </authorList>
    </citation>
    <scope>VARIANT SCA13 HIS-423</scope>
    <scope>VARIANT ASP-263</scope>
    <scope>CHARACTERIZATION OF VARIANT ASP-263</scope>
    <scope>FUNCTION</scope>
    <scope>TRANSPORTER ACTIVITY</scope>
</reference>
<reference key="11">
    <citation type="journal article" date="2015" name="PLoS ONE">
        <title>Functional analysis helps to define KCNC3 mutational spectrum in dutch ataxia cases.</title>
        <authorList>
            <person name="Duarri A."/>
            <person name="Nibbeling E.A."/>
            <person name="Fokkens M.R."/>
            <person name="Meijer M."/>
            <person name="Boerrigter M."/>
            <person name="Verschuuren-Bemelmans C.C."/>
            <person name="Kremer B.P."/>
            <person name="van de Warrenburg B.P."/>
            <person name="Dooijes D."/>
            <person name="Boddeke E."/>
            <person name="Sinke R.J."/>
            <person name="Verbeek D.S."/>
        </authorList>
    </citation>
    <scope>VARIANTS SCA13 ASN-129; HIS-420; HIS-423; ASN-477; MET-535; GLY-591; SER-643; ARG-645 AND ASN-746</scope>
    <scope>VARIANTS HIS-41 AND GLY-63</scope>
    <scope>CHARACTERIZATION OF VARIANTS SCA13 ASN-129; HIS-420; HIS-423; ASN-477; MET-535; GLY-591; SER-643; ARG-645 AND ASN-746</scope>
    <scope>FUNCTION</scope>
    <scope>TRANSPORTER ACTIVITY</scope>
    <scope>SUBCELLULAR LOCATION</scope>
</reference>
<comment type="function">
    <text evidence="4 7 8 9 10 11 12 14 15">Voltage-gated potassium channel that plays an important role in the rapid repolarization of fast-firing brain neurons. The channel opens in response to the voltage difference across the membrane, forming a potassium-selective channel through which potassium ions pass in accordance with their electrochemical gradient. The channel displays rapid activation and inactivation kinetics (PubMed:10712820, PubMed:16501573, PubMed:19953606, PubMed:21479265, PubMed:22289912, PubMed:23734863, PubMed:25756792, PubMed:26997484). It plays a role in the regulation of the frequency, shape and duration of action potentials in Purkinje cells. Required for normal survival of cerebellar neurons, probably via its role in regulating the duration and frequency of action potentials that in turn regulate the activity of voltage-gated Ca(2+) channels and cellular Ca(2+) homeostasis (By similarity). Required for normal motor function (PubMed:16501573, PubMed:19953606, PubMed:21479265, PubMed:23734863, PubMed:25756792). Plays a role in the reorganization of the cortical actin cytoskeleton and the formation of actin veil structures in neuronal growth cones via its interaction with HAX1 and the Arp2/3 complex (PubMed:26997484).</text>
</comment>
<comment type="catalytic activity">
    <reaction evidence="7 8 9 10 11 12 14 15">
        <text>K(+)(in) = K(+)(out)</text>
        <dbReference type="Rhea" id="RHEA:29463"/>
        <dbReference type="ChEBI" id="CHEBI:29103"/>
    </reaction>
</comment>
<comment type="subunit">
    <text evidence="12 15">Homotetramer. Heterotetramer with KCNC1 (PubMed:23734863). Interacts (via C-terminus) with HAX1; this interaction modulates channel gating (PubMed:26997484). Identified in a complex with ACTR3, a subunit of the Arp2/3 complex; this interaction is indirect and depends on the presence of HAX1 (PubMed:26997484).</text>
</comment>
<comment type="subcellular location">
    <subcellularLocation>
        <location evidence="7 8 9 11 12 13 14 15">Cell membrane</location>
        <topology evidence="5">Multi-pass membrane protein</topology>
    </subcellularLocation>
    <subcellularLocation>
        <location evidence="4">Presynaptic cell membrane</location>
        <topology evidence="5">Multi-pass membrane protein</topology>
    </subcellularLocation>
    <subcellularLocation>
        <location evidence="4">Perikaryon</location>
    </subcellularLocation>
    <subcellularLocation>
        <location evidence="4">Cell projection</location>
        <location evidence="4">Axon</location>
    </subcellularLocation>
    <subcellularLocation>
        <location evidence="4">Cell projection</location>
        <location evidence="4">Dendrite</location>
    </subcellularLocation>
    <subcellularLocation>
        <location evidence="3">Cell projection</location>
        <location evidence="3">Dendritic spine membrane</location>
        <topology evidence="5">Multi-pass membrane protein</topology>
    </subcellularLocation>
    <subcellularLocation>
        <location evidence="15">Cytoplasm</location>
        <location evidence="15">Cell cortex</location>
    </subcellularLocation>
    <subcellularLocation>
        <location evidence="15">Cytoplasm</location>
        <location evidence="15">Cytoskeleton</location>
    </subcellularLocation>
    <text evidence="3 4 15">Detected on Purkinje cell dendritic spines, positioned perisynaptically but also in extrasynaptic positions along the spine membranes (By similarity). Detected at presynaptic calices of Held (By similarity). Colocalizes with the cortical actin cytoskeleton and the Arp2/3 complex (PubMed:26997484).</text>
</comment>
<comment type="domain">
    <text evidence="16">The segment S4 is probably the voltage-sensor and is characterized by a series of positively charged amino acids at every third position.</text>
</comment>
<comment type="domain">
    <text evidence="15">The cytoplasmic N-terminus mediates N-type inactivation.</text>
</comment>
<comment type="domain">
    <text evidence="15">The C-terminal cytoplasmic tail contributes to the regulation of channel inactivation and to the interaction with HAX1 and the Arp2/3 complex.</text>
</comment>
<comment type="PTM">
    <text evidence="13">N-glycosylated.</text>
</comment>
<comment type="disease" evidence="8 9 10 11 12 13 14">
    <disease id="DI-01076">
        <name>Spinocerebellar ataxia 13</name>
        <acronym>SCA13</acronym>
        <description>Spinocerebellar ataxia is a clinically and genetically heterogeneous group of cerebellar disorders. Patients show progressive incoordination of gait and often poor coordination of hands, speech and eye movements, due to degeneration of the cerebellum with variable involvement of the brainstem and spinal cord. SCA13 is an autosomal dominant cerebellar ataxia (ADCA) characterized by slow progression and variable age at onset, ranging from childhood to late adulthood. Intellectual disability can be present in some patients.</description>
        <dbReference type="MIM" id="605259"/>
    </disease>
    <text>The disease is caused by variants affecting the gene represented in this entry.</text>
</comment>
<comment type="similarity">
    <text evidence="16">Belongs to the potassium channel family. C (Shaw) (TC 1.A.1.2) subfamily. Kv3.3/KCNC3 sub-subfamily.</text>
</comment>
<organism>
    <name type="scientific">Homo sapiens</name>
    <name type="common">Human</name>
    <dbReference type="NCBI Taxonomy" id="9606"/>
    <lineage>
        <taxon>Eukaryota</taxon>
        <taxon>Metazoa</taxon>
        <taxon>Chordata</taxon>
        <taxon>Craniata</taxon>
        <taxon>Vertebrata</taxon>
        <taxon>Euteleostomi</taxon>
        <taxon>Mammalia</taxon>
        <taxon>Eutheria</taxon>
        <taxon>Euarchontoglires</taxon>
        <taxon>Primates</taxon>
        <taxon>Haplorrhini</taxon>
        <taxon>Catarrhini</taxon>
        <taxon>Hominidae</taxon>
        <taxon>Homo</taxon>
    </lineage>
</organism>
<accession>Q14003</accession>
<name>KCNC3_HUMAN</name>
<evidence type="ECO:0000250" key="1"/>
<evidence type="ECO:0000250" key="2">
    <source>
        <dbReference type="UniProtKB" id="P48547"/>
    </source>
</evidence>
<evidence type="ECO:0000250" key="3">
    <source>
        <dbReference type="UniProtKB" id="Q01956"/>
    </source>
</evidence>
<evidence type="ECO:0000250" key="4">
    <source>
        <dbReference type="UniProtKB" id="Q63959"/>
    </source>
</evidence>
<evidence type="ECO:0000255" key="5"/>
<evidence type="ECO:0000256" key="6">
    <source>
        <dbReference type="SAM" id="MobiDB-lite"/>
    </source>
</evidence>
<evidence type="ECO:0000269" key="7">
    <source>
    </source>
</evidence>
<evidence type="ECO:0000269" key="8">
    <source>
    </source>
</evidence>
<evidence type="ECO:0000269" key="9">
    <source>
    </source>
</evidence>
<evidence type="ECO:0000269" key="10">
    <source>
    </source>
</evidence>
<evidence type="ECO:0000269" key="11">
    <source>
    </source>
</evidence>
<evidence type="ECO:0000269" key="12">
    <source>
    </source>
</evidence>
<evidence type="ECO:0000269" key="13">
    <source>
    </source>
</evidence>
<evidence type="ECO:0000269" key="14">
    <source>
    </source>
</evidence>
<evidence type="ECO:0000269" key="15">
    <source>
    </source>
</evidence>
<evidence type="ECO:0000305" key="16"/>
<gene>
    <name type="primary">KCNC3</name>
</gene>
<proteinExistence type="evidence at protein level"/>
<feature type="chain" id="PRO_0000054055" description="Voltage-gated potassium channel KCNC3">
    <location>
        <begin position="1"/>
        <end position="757"/>
    </location>
</feature>
<feature type="topological domain" description="Cytoplasmic" evidence="16">
    <location>
        <begin position="1"/>
        <end position="290"/>
    </location>
</feature>
<feature type="transmembrane region" description="Helical; Name=Segment S1" evidence="5">
    <location>
        <begin position="291"/>
        <end position="309"/>
    </location>
</feature>
<feature type="transmembrane region" description="Helical; Name=Segment S2" evidence="5">
    <location>
        <begin position="351"/>
        <end position="370"/>
    </location>
</feature>
<feature type="topological domain" description="Cytoplasmic" evidence="5">
    <location>
        <begin position="371"/>
        <end position="379"/>
    </location>
</feature>
<feature type="transmembrane region" description="Helical; Name=Segment S3" evidence="5">
    <location>
        <begin position="380"/>
        <end position="398"/>
    </location>
</feature>
<feature type="transmembrane region" description="Helical; Voltage-sensor; Name=Segment S4" evidence="5">
    <location>
        <begin position="412"/>
        <end position="434"/>
    </location>
</feature>
<feature type="topological domain" description="Cytoplasmic" evidence="5">
    <location>
        <begin position="435"/>
        <end position="447"/>
    </location>
</feature>
<feature type="transmembrane region" description="Helical; Name=Segment S5" evidence="5">
    <location>
        <begin position="448"/>
        <end position="469"/>
    </location>
</feature>
<feature type="transmembrane region" description="Helical; Name=Segment S6" evidence="5">
    <location>
        <begin position="518"/>
        <end position="539"/>
    </location>
</feature>
<feature type="topological domain" description="Cytoplasmic" evidence="16">
    <location>
        <begin position="540"/>
        <end position="757"/>
    </location>
</feature>
<feature type="region of interest" description="Disordered" evidence="6">
    <location>
        <begin position="1"/>
        <end position="87"/>
    </location>
</feature>
<feature type="region of interest" description="Important for normal N-type inactivation" evidence="15">
    <location>
        <begin position="1"/>
        <end position="78"/>
    </location>
</feature>
<feature type="region of interest" description="Disordered" evidence="6">
    <location>
        <begin position="210"/>
        <end position="232"/>
    </location>
</feature>
<feature type="region of interest" description="Disordered" evidence="6">
    <location>
        <begin position="556"/>
        <end position="613"/>
    </location>
</feature>
<feature type="region of interest" description="Disordered" evidence="6">
    <location>
        <begin position="682"/>
        <end position="746"/>
    </location>
</feature>
<feature type="short sequence motif" description="Selectivity filter" evidence="1">
    <location>
        <begin position="503"/>
        <end position="508"/>
    </location>
</feature>
<feature type="compositionally biased region" description="Pro residues" evidence="6">
    <location>
        <begin position="21"/>
        <end position="40"/>
    </location>
</feature>
<feature type="compositionally biased region" description="Low complexity" evidence="6">
    <location>
        <begin position="41"/>
        <end position="52"/>
    </location>
</feature>
<feature type="compositionally biased region" description="Low complexity" evidence="6">
    <location>
        <begin position="210"/>
        <end position="219"/>
    </location>
</feature>
<feature type="compositionally biased region" description="Pro residues" evidence="6">
    <location>
        <begin position="728"/>
        <end position="743"/>
    </location>
</feature>
<feature type="binding site" evidence="2">
    <location>
        <position position="157"/>
    </location>
    <ligand>
        <name>Zn(2+)</name>
        <dbReference type="ChEBI" id="CHEBI:29105"/>
    </ligand>
</feature>
<feature type="binding site" evidence="2">
    <location>
        <position position="163"/>
    </location>
    <ligand>
        <name>Zn(2+)</name>
        <dbReference type="ChEBI" id="CHEBI:29105"/>
    </ligand>
</feature>
<feature type="binding site" evidence="2">
    <location>
        <position position="184"/>
    </location>
    <ligand>
        <name>Zn(2+)</name>
        <dbReference type="ChEBI" id="CHEBI:29105"/>
    </ligand>
</feature>
<feature type="binding site" evidence="2">
    <location>
        <position position="185"/>
    </location>
    <ligand>
        <name>Zn(2+)</name>
        <dbReference type="ChEBI" id="CHEBI:29105"/>
    </ligand>
</feature>
<feature type="binding site" evidence="2">
    <location>
        <position position="503"/>
    </location>
    <ligand>
        <name>K(+)</name>
        <dbReference type="ChEBI" id="CHEBI:29103"/>
        <note>ligand shared between homotetrameric partners</note>
    </ligand>
</feature>
<feature type="binding site" evidence="2">
    <location>
        <position position="504"/>
    </location>
    <ligand>
        <name>K(+)</name>
        <dbReference type="ChEBI" id="CHEBI:29103"/>
        <note>ligand shared between homotetrameric partners</note>
    </ligand>
</feature>
<feature type="binding site" evidence="2">
    <location>
        <position position="505"/>
    </location>
    <ligand>
        <name>K(+)</name>
        <dbReference type="ChEBI" id="CHEBI:29103"/>
        <note>ligand shared between homotetrameric partners</note>
    </ligand>
</feature>
<feature type="binding site" evidence="2">
    <location>
        <position position="506"/>
    </location>
    <ligand>
        <name>K(+)</name>
        <dbReference type="ChEBI" id="CHEBI:29103"/>
        <note>ligand shared between homotetrameric partners</note>
    </ligand>
</feature>
<feature type="modified residue" description="Omega-N-methylarginine" evidence="4">
    <location>
        <position position="625"/>
    </location>
</feature>
<feature type="modified residue" description="Phosphoserine" evidence="4">
    <location>
        <position position="686"/>
    </location>
</feature>
<feature type="modified residue" description="Phosphoserine" evidence="4">
    <location>
        <position position="691"/>
    </location>
</feature>
<feature type="glycosylation site" description="N-linked (GlcNAc...) asparagine" evidence="5">
    <location>
        <position position="320"/>
    </location>
</feature>
<feature type="glycosylation site" description="N-linked (GlcNAc...) asparagine" evidence="5">
    <location>
        <position position="336"/>
    </location>
</feature>
<feature type="glycosylation site" description="N-linked (GlcNAc...) asparagine" evidence="5">
    <location>
        <position position="483"/>
    </location>
</feature>
<feature type="sequence variant" id="VAR_074192" description="In dbSNP:rs185017345." evidence="14">
    <original>Q</original>
    <variation>H</variation>
    <location>
        <position position="41"/>
    </location>
</feature>
<feature type="sequence variant" id="VAR_074193" description="In dbSNP:rs375912738." evidence="7 14">
    <original>D</original>
    <variation>G</variation>
    <location>
        <position position="63"/>
    </location>
</feature>
<feature type="sequence variant" id="VAR_074194" description="In SCA13; uncertain significance; changes channel activity; shifts the voltage dependence of activation; dbSNP:rs2037138562." evidence="14">
    <original>D</original>
    <variation>N</variation>
    <location>
        <position position="129"/>
    </location>
</feature>
<feature type="sequence variant" id="VAR_074195" description="Changes channel activity; activates more quickly and deactivates more slowly." evidence="10">
    <original>G</original>
    <variation>D</variation>
    <location>
        <position position="263"/>
    </location>
</feature>
<feature type="sequence variant" id="VAR_074196" description="In SCA13; uncertain significance; dominant negative that decreases channel activity; decreases protein abundance; decreases protein stability; decreases localization to the plasma membrane; no effect on tetramerization; dbSNP:rs769502387." evidence="9 12">
    <original>R</original>
    <variation>H</variation>
    <location>
        <position position="366"/>
    </location>
</feature>
<feature type="sequence variant" id="VAR_029530" description="In SCA13; dominant negative that induces loss of channel activity; decreases protein abundance; decreases protein stability; decreases localization to the plasma membrane and alters the localization of the wild-type protein; impairs N-glycosylation; no effect on tetramerization; dbSNP:rs104894699." evidence="8 9 11 12 13 14">
    <original>R</original>
    <variation>H</variation>
    <location>
        <position position="420"/>
    </location>
</feature>
<feature type="sequence variant" id="VAR_074197" description="In SCA13; dominant negative that reduces channel activity; alters gating; decreases protein abundance; decreases localization to the plasma membrane; no effect on tetramerization; dbSNP:rs797044872." evidence="9 10 11 12 14">
    <original>R</original>
    <variation>H</variation>
    <location>
        <position position="423"/>
    </location>
</feature>
<feature type="sequence variant" id="VAR_029531" description="In SCA13; alters gating; slows channel closing; decreases protein abundance; no effect on localization to the plasma membrane; no effect on N-glycosylation; no effect on tetramerization; dbSNP:rs104894700." evidence="8 11 12 13">
    <original>F</original>
    <variation>L</variation>
    <location>
        <position position="448"/>
    </location>
</feature>
<feature type="sequence variant" id="VAR_074198" description="In SCA13; uncertain significance; no effect on channel activity; dbSNP:rs148033381." evidence="14">
    <original>D</original>
    <variation>N</variation>
    <location>
        <position position="477"/>
    </location>
</feature>
<feature type="sequence variant" id="VAR_074199" description="In SCA13; changes channel activity; shifts the voltage dependence of activation." evidence="14">
    <original>V</original>
    <variation>M</variation>
    <location>
        <position position="535"/>
    </location>
</feature>
<feature type="sequence variant" id="VAR_074200" description="In SCA13; uncertain significance; reduces channel activity; shifts the voltage dependence of activation; dbSNP:rs549394447." evidence="14">
    <original>S</original>
    <variation>G</variation>
    <location>
        <position position="591"/>
    </location>
</feature>
<feature type="sequence variant" id="VAR_074201" description="In SCA13; uncertain significance; no effect on channel activity; dbSNP:rs778523009." evidence="14">
    <original>G</original>
    <variation>S</variation>
    <location>
        <position position="643"/>
    </location>
</feature>
<feature type="sequence variant" id="VAR_074202" description="In SCA13; uncertain significance; no effect on channel activity; dbSNP:rs1460306526." evidence="14">
    <original>P</original>
    <variation>R</variation>
    <location>
        <position position="645"/>
    </location>
</feature>
<feature type="sequence variant" id="VAR_074203" description="In SCA13; uncertain significance; no effect on channel activity; dbSNP:rs958323371." evidence="14">
    <original>D</original>
    <variation>N</variation>
    <location>
        <position position="746"/>
    </location>
</feature>
<feature type="mutagenesis site" description="Loss of N-type inactivation." evidence="15">
    <location>
        <begin position="1"/>
        <end position="78"/>
    </location>
</feature>
<feature type="mutagenesis site" description="Decreases protein abundance." evidence="12">
    <original>R</original>
    <variation>K</variation>
    <variation>A</variation>
    <location>
        <position position="366"/>
    </location>
</feature>
<feature type="mutagenesis site" description="Decreases protein abundance." evidence="12">
    <original>R</original>
    <variation>K</variation>
    <variation>A</variation>
    <location>
        <position position="420"/>
    </location>
</feature>
<feature type="mutagenesis site" description="Decreases protein abundance." evidence="12">
    <original>R</original>
    <variation>K</variation>
    <variation>A</variation>
    <location>
        <position position="423"/>
    </location>
</feature>
<feature type="mutagenesis site" description="Loss of interaction with ACTR3. No effect on voltage-dependent channel opening or current amplitude, but decreased rate of inactivation during prolonged depolarization." evidence="15">
    <original>G</original>
    <variation>R</variation>
    <location>
        <position position="592"/>
    </location>
</feature>
<protein>
    <recommendedName>
        <fullName evidence="16">Voltage-gated potassium channel KCNC3</fullName>
    </recommendedName>
    <alternativeName>
        <fullName evidence="3">KSHIIID</fullName>
    </alternativeName>
    <alternativeName>
        <fullName>Potassium voltage-gated channel subfamily C member 3</fullName>
    </alternativeName>
    <alternativeName>
        <fullName evidence="3">Voltage-gated potassium channel subunit Kv3.3</fullName>
    </alternativeName>
</protein>
<keyword id="KW-1003">Cell membrane</keyword>
<keyword id="KW-0966">Cell projection</keyword>
<keyword id="KW-0963">Cytoplasm</keyword>
<keyword id="KW-0206">Cytoskeleton</keyword>
<keyword id="KW-0225">Disease variant</keyword>
<keyword id="KW-0325">Glycoprotein</keyword>
<keyword id="KW-0407">Ion channel</keyword>
<keyword id="KW-0406">Ion transport</keyword>
<keyword id="KW-0472">Membrane</keyword>
<keyword id="KW-0479">Metal-binding</keyword>
<keyword id="KW-0488">Methylation</keyword>
<keyword id="KW-0523">Neurodegeneration</keyword>
<keyword id="KW-0597">Phosphoprotein</keyword>
<keyword id="KW-0628">Postsynaptic cell membrane</keyword>
<keyword id="KW-0630">Potassium</keyword>
<keyword id="KW-0631">Potassium channel</keyword>
<keyword id="KW-0633">Potassium transport</keyword>
<keyword id="KW-1267">Proteomics identification</keyword>
<keyword id="KW-1185">Reference proteome</keyword>
<keyword id="KW-0950">Spinocerebellar ataxia</keyword>
<keyword id="KW-0770">Synapse</keyword>
<keyword id="KW-0812">Transmembrane</keyword>
<keyword id="KW-1133">Transmembrane helix</keyword>
<keyword id="KW-0813">Transport</keyword>
<keyword id="KW-0851">Voltage-gated channel</keyword>
<keyword id="KW-0862">Zinc</keyword>
<sequence length="757" mass="80578">MLSSVCVSSFRGRQGASKQQPAPPPQPPESPPPPPLPPQQQQPAQPGPAASPAGPPAPRGPGDRRAEPCPGLPAAAMGRHGGGGGDSGKIVINVGGVRHETYRSTLRTLPGTRLAGLTEPEAAARFDYDPGADEFFFDRHPGVFAYVLNYYRTGKLHCPADVCGPLFEEELGFWGIDETDVEACCWMTYRQHRDAEEALDSFEAPDPAGAANAANAAGAHDGGLDDEAGAGGGGLDGAGGELKRLCFQDAGGGAGGPPGGAGGAGGTWWRRWQPRVWALFEDPYSSRAARYVAFASLFFILISITTFCLETHEGFIHISNKTVTQASPIPGAPPENITNVEVETEPFLTYVEGVCVVWFTFEFLMRITFCPDKVEFLKSSLNIIDCVAILPFYLEVGLSGLSSKAAKDVLGFLRVVRFVRILRIFKLTRHFVGLRVLGHTLRASTNEFLLLIIFLALGVLIFATMIYYAERIGADPDDILGSNHTYFKNIPIGFWWAVVTMTTLGYGDMYPKTWSGMLVGALCALAGVLTIAMPVPVIVNNFGMYYSLAMAKQKLPKKKNKHIPRPPQPGSPNYCKPDPPPPPPPHPHHGSGGISPPPPITPPSMGVTVAGAYPAGPHTHPGLLRGGAGGLGIMGLPPLPAPGEPCPLAQEEVIEINRADPRPNGDPAAAALAHEDCPAIDQPAMSPEDKSPITPGSRGRYSRDRACFLLTDYAPSPDGSIRKATGAPPLPPQDWRKPGPPSFLPDLNANAAAWISP</sequence>
<dbReference type="EMBL" id="AF055989">
    <property type="protein sequence ID" value="AAC24118.1"/>
    <property type="molecule type" value="mRNA"/>
</dbReference>
<dbReference type="EMBL" id="AC008655">
    <property type="status" value="NOT_ANNOTATED_CDS"/>
    <property type="molecule type" value="Genomic_DNA"/>
</dbReference>
<dbReference type="EMBL" id="Z11585">
    <property type="protein sequence ID" value="CAA77671.1"/>
    <property type="molecule type" value="Genomic_DNA"/>
</dbReference>
<dbReference type="CCDS" id="CCDS12793.1"/>
<dbReference type="PIR" id="S19552">
    <property type="entry name" value="S19552"/>
</dbReference>
<dbReference type="RefSeq" id="NP_004968.2">
    <property type="nucleotide sequence ID" value="NM_004977.2"/>
</dbReference>
<dbReference type="RefSeq" id="XP_006723266.1">
    <property type="nucleotide sequence ID" value="XM_006723203.2"/>
</dbReference>
<dbReference type="RefSeq" id="XP_011525228.1">
    <property type="nucleotide sequence ID" value="XM_011526926.1"/>
</dbReference>
<dbReference type="SMR" id="Q14003"/>
<dbReference type="BioGRID" id="109950">
    <property type="interactions" value="34"/>
</dbReference>
<dbReference type="CORUM" id="Q14003"/>
<dbReference type="FunCoup" id="Q14003">
    <property type="interactions" value="129"/>
</dbReference>
<dbReference type="IntAct" id="Q14003">
    <property type="interactions" value="27"/>
</dbReference>
<dbReference type="STRING" id="9606.ENSP00000434241"/>
<dbReference type="ChEMBL" id="CHEMBL2362996"/>
<dbReference type="DrugBank" id="DB06637">
    <property type="generic name" value="Dalfampridine"/>
</dbReference>
<dbReference type="DrugBank" id="DB00228">
    <property type="generic name" value="Enflurane"/>
</dbReference>
<dbReference type="DrugBank" id="DB01110">
    <property type="generic name" value="Miconazole"/>
</dbReference>
<dbReference type="DrugBank" id="DB01069">
    <property type="generic name" value="Promethazine"/>
</dbReference>
<dbReference type="DrugCentral" id="Q14003"/>
<dbReference type="TCDB" id="1.A.1.2.13">
    <property type="family name" value="the voltage-gated ion channel (vic) superfamily"/>
</dbReference>
<dbReference type="GlyCosmos" id="Q14003">
    <property type="glycosylation" value="3 sites, No reported glycans"/>
</dbReference>
<dbReference type="GlyGen" id="Q14003">
    <property type="glycosylation" value="6 sites, 1 O-linked glycan (1 site)"/>
</dbReference>
<dbReference type="iPTMnet" id="Q14003"/>
<dbReference type="PhosphoSitePlus" id="Q14003"/>
<dbReference type="BioMuta" id="KCNC3"/>
<dbReference type="DMDM" id="212276500"/>
<dbReference type="jPOST" id="Q14003"/>
<dbReference type="MassIVE" id="Q14003"/>
<dbReference type="PaxDb" id="9606-ENSP00000434241"/>
<dbReference type="PeptideAtlas" id="Q14003"/>
<dbReference type="ProteomicsDB" id="59785"/>
<dbReference type="ABCD" id="Q14003">
    <property type="antibodies" value="1 sequenced antibody"/>
</dbReference>
<dbReference type="Antibodypedia" id="18827">
    <property type="antibodies" value="298 antibodies from 29 providers"/>
</dbReference>
<dbReference type="DNASU" id="3748"/>
<dbReference type="Ensembl" id="ENST00000477616.2">
    <property type="protein sequence ID" value="ENSP00000434241.1"/>
    <property type="gene ID" value="ENSG00000131398.15"/>
</dbReference>
<dbReference type="GeneID" id="3748"/>
<dbReference type="KEGG" id="hsa:3748"/>
<dbReference type="MANE-Select" id="ENST00000477616.2">
    <property type="protein sequence ID" value="ENSP00000434241.1"/>
    <property type="RefSeq nucleotide sequence ID" value="NM_004977.3"/>
    <property type="RefSeq protein sequence ID" value="NP_004968.2"/>
</dbReference>
<dbReference type="UCSC" id="uc002pru.1">
    <property type="organism name" value="human"/>
</dbReference>
<dbReference type="AGR" id="HGNC:6235"/>
<dbReference type="CTD" id="3748"/>
<dbReference type="DisGeNET" id="3748"/>
<dbReference type="GeneCards" id="KCNC3"/>
<dbReference type="GeneReviews" id="KCNC3"/>
<dbReference type="HGNC" id="HGNC:6235">
    <property type="gene designation" value="KCNC3"/>
</dbReference>
<dbReference type="HPA" id="ENSG00000131398">
    <property type="expression patterns" value="Tissue enhanced (brain, thyroid gland)"/>
</dbReference>
<dbReference type="MalaCards" id="KCNC3"/>
<dbReference type="MIM" id="176264">
    <property type="type" value="gene"/>
</dbReference>
<dbReference type="MIM" id="605259">
    <property type="type" value="phenotype"/>
</dbReference>
<dbReference type="neXtProt" id="NX_Q14003"/>
<dbReference type="OpenTargets" id="ENSG00000131398"/>
<dbReference type="Orphanet" id="98768">
    <property type="disease" value="Spinocerebellar ataxia type 13"/>
</dbReference>
<dbReference type="PharmGKB" id="PA30027"/>
<dbReference type="VEuPathDB" id="HostDB:ENSG00000131398"/>
<dbReference type="eggNOG" id="KOG3713">
    <property type="taxonomic scope" value="Eukaryota"/>
</dbReference>
<dbReference type="GeneTree" id="ENSGT00940000163131"/>
<dbReference type="InParanoid" id="Q14003"/>
<dbReference type="OMA" id="NDEAGAC"/>
<dbReference type="OrthoDB" id="10025005at2759"/>
<dbReference type="PAN-GO" id="Q14003">
    <property type="GO annotations" value="7 GO annotations based on evolutionary models"/>
</dbReference>
<dbReference type="PhylomeDB" id="Q14003"/>
<dbReference type="TreeFam" id="TF352511"/>
<dbReference type="PathwayCommons" id="Q14003"/>
<dbReference type="Reactome" id="R-HSA-1296072">
    <property type="pathway name" value="Voltage gated Potassium channels"/>
</dbReference>
<dbReference type="SignaLink" id="Q14003"/>
<dbReference type="SIGNOR" id="Q14003"/>
<dbReference type="BioGRID-ORCS" id="3748">
    <property type="hits" value="128 hits in 1168 CRISPR screens"/>
</dbReference>
<dbReference type="ChiTaRS" id="KCNC3">
    <property type="organism name" value="human"/>
</dbReference>
<dbReference type="GeneWiki" id="KCNC3"/>
<dbReference type="GenomeRNAi" id="3748"/>
<dbReference type="Pharos" id="Q14003">
    <property type="development level" value="Tclin"/>
</dbReference>
<dbReference type="PRO" id="PR:Q14003"/>
<dbReference type="Proteomes" id="UP000005640">
    <property type="component" value="Chromosome 19"/>
</dbReference>
<dbReference type="RNAct" id="Q14003">
    <property type="molecule type" value="protein"/>
</dbReference>
<dbReference type="Bgee" id="ENSG00000131398">
    <property type="expression patterns" value="Expressed in kidney epithelium and 148 other cell types or tissues"/>
</dbReference>
<dbReference type="ExpressionAtlas" id="Q14003">
    <property type="expression patterns" value="baseline and differential"/>
</dbReference>
<dbReference type="GO" id="GO:0043679">
    <property type="term" value="C:axon terminus"/>
    <property type="evidence" value="ECO:0000318"/>
    <property type="project" value="GO_Central"/>
</dbReference>
<dbReference type="GO" id="GO:0005938">
    <property type="term" value="C:cell cortex"/>
    <property type="evidence" value="ECO:0000314"/>
    <property type="project" value="UniProtKB"/>
</dbReference>
<dbReference type="GO" id="GO:0005856">
    <property type="term" value="C:cytoskeleton"/>
    <property type="evidence" value="ECO:0007669"/>
    <property type="project" value="UniProtKB-SubCell"/>
</dbReference>
<dbReference type="GO" id="GO:0030425">
    <property type="term" value="C:dendrite"/>
    <property type="evidence" value="ECO:0000314"/>
    <property type="project" value="UniProtKB"/>
</dbReference>
<dbReference type="GO" id="GO:0032590">
    <property type="term" value="C:dendrite membrane"/>
    <property type="evidence" value="ECO:0000318"/>
    <property type="project" value="GO_Central"/>
</dbReference>
<dbReference type="GO" id="GO:0032591">
    <property type="term" value="C:dendritic spine membrane"/>
    <property type="evidence" value="ECO:0007669"/>
    <property type="project" value="UniProtKB-SubCell"/>
</dbReference>
<dbReference type="GO" id="GO:0032809">
    <property type="term" value="C:neuronal cell body membrane"/>
    <property type="evidence" value="ECO:0000318"/>
    <property type="project" value="GO_Central"/>
</dbReference>
<dbReference type="GO" id="GO:0043204">
    <property type="term" value="C:perikaryon"/>
    <property type="evidence" value="ECO:0007669"/>
    <property type="project" value="UniProtKB-SubCell"/>
</dbReference>
<dbReference type="GO" id="GO:0005886">
    <property type="term" value="C:plasma membrane"/>
    <property type="evidence" value="ECO:0000314"/>
    <property type="project" value="UniProtKB"/>
</dbReference>
<dbReference type="GO" id="GO:0045211">
    <property type="term" value="C:postsynaptic membrane"/>
    <property type="evidence" value="ECO:0000318"/>
    <property type="project" value="GO_Central"/>
</dbReference>
<dbReference type="GO" id="GO:0042734">
    <property type="term" value="C:presynaptic membrane"/>
    <property type="evidence" value="ECO:0000318"/>
    <property type="project" value="GO_Central"/>
</dbReference>
<dbReference type="GO" id="GO:0008076">
    <property type="term" value="C:voltage-gated potassium channel complex"/>
    <property type="evidence" value="ECO:0000314"/>
    <property type="project" value="UniProtKB"/>
</dbReference>
<dbReference type="GO" id="GO:0005251">
    <property type="term" value="F:delayed rectifier potassium channel activity"/>
    <property type="evidence" value="ECO:0000318"/>
    <property type="project" value="GO_Central"/>
</dbReference>
<dbReference type="GO" id="GO:0046872">
    <property type="term" value="F:metal ion binding"/>
    <property type="evidence" value="ECO:0007669"/>
    <property type="project" value="UniProtKB-KW"/>
</dbReference>
<dbReference type="GO" id="GO:0005249">
    <property type="term" value="F:voltage-gated potassium channel activity"/>
    <property type="evidence" value="ECO:0000314"/>
    <property type="project" value="UniProtKB"/>
</dbReference>
<dbReference type="GO" id="GO:0001508">
    <property type="term" value="P:action potential"/>
    <property type="evidence" value="ECO:0000318"/>
    <property type="project" value="GO_Central"/>
</dbReference>
<dbReference type="GO" id="GO:0030866">
    <property type="term" value="P:cortical actin cytoskeleton organization"/>
    <property type="evidence" value="ECO:0000314"/>
    <property type="project" value="UniProtKB"/>
</dbReference>
<dbReference type="GO" id="GO:0071805">
    <property type="term" value="P:potassium ion transmembrane transport"/>
    <property type="evidence" value="ECO:0000315"/>
    <property type="project" value="UniProtKB"/>
</dbReference>
<dbReference type="GO" id="GO:0006813">
    <property type="term" value="P:potassium ion transport"/>
    <property type="evidence" value="ECO:0000314"/>
    <property type="project" value="UniProtKB"/>
</dbReference>
<dbReference type="GO" id="GO:0051260">
    <property type="term" value="P:protein homooligomerization"/>
    <property type="evidence" value="ECO:0007669"/>
    <property type="project" value="InterPro"/>
</dbReference>
<dbReference type="GO" id="GO:0051262">
    <property type="term" value="P:protein tetramerization"/>
    <property type="evidence" value="ECO:0000314"/>
    <property type="project" value="UniProtKB"/>
</dbReference>
<dbReference type="CDD" id="cd18414">
    <property type="entry name" value="BTB_KCNC1_3"/>
    <property type="match status" value="1"/>
</dbReference>
<dbReference type="FunFam" id="1.10.287.70:FF:000011">
    <property type="entry name" value="Potassium channel, voltage-gated Shaw-related subfamily C, member 4"/>
    <property type="match status" value="1"/>
</dbReference>
<dbReference type="FunFam" id="1.20.120.350:FF:000014">
    <property type="entry name" value="Potassium channel, voltage-gated Shaw-related subfamily C, member 4"/>
    <property type="match status" value="1"/>
</dbReference>
<dbReference type="FunFam" id="3.30.710.10:FF:000002">
    <property type="entry name" value="Potassium voltage-gated channel subfamily C member 2"/>
    <property type="match status" value="1"/>
</dbReference>
<dbReference type="Gene3D" id="1.10.287.70">
    <property type="match status" value="1"/>
</dbReference>
<dbReference type="Gene3D" id="3.30.710.10">
    <property type="entry name" value="Potassium Channel Kv1.1, Chain A"/>
    <property type="match status" value="1"/>
</dbReference>
<dbReference type="Gene3D" id="1.20.120.350">
    <property type="entry name" value="Voltage-gated potassium channels. Chain C"/>
    <property type="match status" value="1"/>
</dbReference>
<dbReference type="InterPro" id="IPR000210">
    <property type="entry name" value="BTB/POZ_dom"/>
</dbReference>
<dbReference type="InterPro" id="IPR005821">
    <property type="entry name" value="Ion_trans_dom"/>
</dbReference>
<dbReference type="InterPro" id="IPR003968">
    <property type="entry name" value="K_chnl_volt-dep_Kv"/>
</dbReference>
<dbReference type="InterPro" id="IPR003974">
    <property type="entry name" value="K_chnl_volt-dep_Kv3"/>
</dbReference>
<dbReference type="InterPro" id="IPR005404">
    <property type="entry name" value="K_chnl_volt-dep_Kv3.3"/>
</dbReference>
<dbReference type="InterPro" id="IPR011333">
    <property type="entry name" value="SKP1/BTB/POZ_sf"/>
</dbReference>
<dbReference type="InterPro" id="IPR003131">
    <property type="entry name" value="T1-type_BTB"/>
</dbReference>
<dbReference type="InterPro" id="IPR028325">
    <property type="entry name" value="VG_K_chnl"/>
</dbReference>
<dbReference type="InterPro" id="IPR027359">
    <property type="entry name" value="Volt_channel_dom_sf"/>
</dbReference>
<dbReference type="PANTHER" id="PTHR11537:SF184">
    <property type="entry name" value="POTASSIUM VOLTAGE-GATED CHANNEL SUBFAMILY C MEMBER 3"/>
    <property type="match status" value="1"/>
</dbReference>
<dbReference type="PANTHER" id="PTHR11537">
    <property type="entry name" value="VOLTAGE-GATED POTASSIUM CHANNEL"/>
    <property type="match status" value="1"/>
</dbReference>
<dbReference type="Pfam" id="PF02214">
    <property type="entry name" value="BTB_2"/>
    <property type="match status" value="1"/>
</dbReference>
<dbReference type="Pfam" id="PF00520">
    <property type="entry name" value="Ion_trans"/>
    <property type="match status" value="1"/>
</dbReference>
<dbReference type="PRINTS" id="PR00169">
    <property type="entry name" value="KCHANNEL"/>
</dbReference>
<dbReference type="PRINTS" id="PR01582">
    <property type="entry name" value="KV33CHANNEL"/>
</dbReference>
<dbReference type="PRINTS" id="PR01491">
    <property type="entry name" value="KVCHANNEL"/>
</dbReference>
<dbReference type="PRINTS" id="PR01498">
    <property type="entry name" value="SHAWCHANNEL"/>
</dbReference>
<dbReference type="SMART" id="SM00225">
    <property type="entry name" value="BTB"/>
    <property type="match status" value="1"/>
</dbReference>
<dbReference type="SUPFAM" id="SSF54695">
    <property type="entry name" value="POZ domain"/>
    <property type="match status" value="1"/>
</dbReference>
<dbReference type="SUPFAM" id="SSF81324">
    <property type="entry name" value="Voltage-gated potassium channels"/>
    <property type="match status" value="1"/>
</dbReference>